<accession>C1CRC4</accession>
<feature type="chain" id="PRO_1000200903" description="Peptidase T">
    <location>
        <begin position="1"/>
        <end position="407"/>
    </location>
</feature>
<feature type="active site" evidence="1">
    <location>
        <position position="83"/>
    </location>
</feature>
<feature type="active site" description="Proton acceptor" evidence="1">
    <location>
        <position position="176"/>
    </location>
</feature>
<feature type="binding site" evidence="1">
    <location>
        <position position="81"/>
    </location>
    <ligand>
        <name>Zn(2+)</name>
        <dbReference type="ChEBI" id="CHEBI:29105"/>
        <label>1</label>
    </ligand>
</feature>
<feature type="binding site" evidence="1">
    <location>
        <position position="142"/>
    </location>
    <ligand>
        <name>Zn(2+)</name>
        <dbReference type="ChEBI" id="CHEBI:29105"/>
        <label>1</label>
    </ligand>
</feature>
<feature type="binding site" evidence="1">
    <location>
        <position position="142"/>
    </location>
    <ligand>
        <name>Zn(2+)</name>
        <dbReference type="ChEBI" id="CHEBI:29105"/>
        <label>2</label>
    </ligand>
</feature>
<feature type="binding site" evidence="1">
    <location>
        <position position="177"/>
    </location>
    <ligand>
        <name>Zn(2+)</name>
        <dbReference type="ChEBI" id="CHEBI:29105"/>
        <label>2</label>
    </ligand>
</feature>
<feature type="binding site" evidence="1">
    <location>
        <position position="199"/>
    </location>
    <ligand>
        <name>Zn(2+)</name>
        <dbReference type="ChEBI" id="CHEBI:29105"/>
        <label>1</label>
    </ligand>
</feature>
<feature type="binding site" evidence="1">
    <location>
        <position position="381"/>
    </location>
    <ligand>
        <name>Zn(2+)</name>
        <dbReference type="ChEBI" id="CHEBI:29105"/>
        <label>2</label>
    </ligand>
</feature>
<comment type="function">
    <text evidence="1">Cleaves the N-terminal amino acid of tripeptides.</text>
</comment>
<comment type="catalytic activity">
    <reaction evidence="1">
        <text>Release of the N-terminal residue from a tripeptide.</text>
        <dbReference type="EC" id="3.4.11.4"/>
    </reaction>
</comment>
<comment type="cofactor">
    <cofactor evidence="1">
        <name>Zn(2+)</name>
        <dbReference type="ChEBI" id="CHEBI:29105"/>
    </cofactor>
    <text evidence="1">Binds 2 Zn(2+) ions per subunit.</text>
</comment>
<comment type="subcellular location">
    <subcellularLocation>
        <location evidence="1">Cytoplasm</location>
    </subcellularLocation>
</comment>
<comment type="similarity">
    <text evidence="1">Belongs to the peptidase M20B family.</text>
</comment>
<dbReference type="EC" id="3.4.11.4" evidence="1"/>
<dbReference type="EMBL" id="CP000921">
    <property type="protein sequence ID" value="ACO22765.1"/>
    <property type="molecule type" value="Genomic_DNA"/>
</dbReference>
<dbReference type="RefSeq" id="WP_000222016.1">
    <property type="nucleotide sequence ID" value="NC_012469.1"/>
</dbReference>
<dbReference type="SMR" id="C1CRC4"/>
<dbReference type="MEROPS" id="M20.003"/>
<dbReference type="KEGG" id="snt:SPT_1055"/>
<dbReference type="HOGENOM" id="CLU_053676_0_0_9"/>
<dbReference type="GO" id="GO:0005829">
    <property type="term" value="C:cytosol"/>
    <property type="evidence" value="ECO:0007669"/>
    <property type="project" value="TreeGrafter"/>
</dbReference>
<dbReference type="GO" id="GO:0008237">
    <property type="term" value="F:metallopeptidase activity"/>
    <property type="evidence" value="ECO:0007669"/>
    <property type="project" value="UniProtKB-KW"/>
</dbReference>
<dbReference type="GO" id="GO:0045148">
    <property type="term" value="F:tripeptide aminopeptidase activity"/>
    <property type="evidence" value="ECO:0007669"/>
    <property type="project" value="UniProtKB-UniRule"/>
</dbReference>
<dbReference type="GO" id="GO:0008270">
    <property type="term" value="F:zinc ion binding"/>
    <property type="evidence" value="ECO:0007669"/>
    <property type="project" value="UniProtKB-UniRule"/>
</dbReference>
<dbReference type="GO" id="GO:0043171">
    <property type="term" value="P:peptide catabolic process"/>
    <property type="evidence" value="ECO:0007669"/>
    <property type="project" value="UniProtKB-UniRule"/>
</dbReference>
<dbReference type="GO" id="GO:0006508">
    <property type="term" value="P:proteolysis"/>
    <property type="evidence" value="ECO:0007669"/>
    <property type="project" value="UniProtKB-UniRule"/>
</dbReference>
<dbReference type="CDD" id="cd03892">
    <property type="entry name" value="M20_peptT"/>
    <property type="match status" value="1"/>
</dbReference>
<dbReference type="FunFam" id="3.30.70.360:FF:000002">
    <property type="entry name" value="Peptidase T"/>
    <property type="match status" value="1"/>
</dbReference>
<dbReference type="Gene3D" id="3.30.70.360">
    <property type="match status" value="1"/>
</dbReference>
<dbReference type="Gene3D" id="3.40.630.10">
    <property type="entry name" value="Zn peptidases"/>
    <property type="match status" value="1"/>
</dbReference>
<dbReference type="HAMAP" id="MF_00550">
    <property type="entry name" value="Aminopeptidase_M20"/>
    <property type="match status" value="1"/>
</dbReference>
<dbReference type="InterPro" id="IPR001261">
    <property type="entry name" value="ArgE/DapE_CS"/>
</dbReference>
<dbReference type="InterPro" id="IPR036264">
    <property type="entry name" value="Bact_exopeptidase_dim_dom"/>
</dbReference>
<dbReference type="InterPro" id="IPR002933">
    <property type="entry name" value="Peptidase_M20"/>
</dbReference>
<dbReference type="InterPro" id="IPR011650">
    <property type="entry name" value="Peptidase_M20_dimer"/>
</dbReference>
<dbReference type="InterPro" id="IPR010161">
    <property type="entry name" value="Peptidase_M20B"/>
</dbReference>
<dbReference type="NCBIfam" id="TIGR01882">
    <property type="entry name" value="peptidase-T"/>
    <property type="match status" value="1"/>
</dbReference>
<dbReference type="NCBIfam" id="NF003976">
    <property type="entry name" value="PRK05469.1"/>
    <property type="match status" value="1"/>
</dbReference>
<dbReference type="NCBIfam" id="NF009920">
    <property type="entry name" value="PRK13381.1"/>
    <property type="match status" value="1"/>
</dbReference>
<dbReference type="PANTHER" id="PTHR42994">
    <property type="entry name" value="PEPTIDASE T"/>
    <property type="match status" value="1"/>
</dbReference>
<dbReference type="PANTHER" id="PTHR42994:SF1">
    <property type="entry name" value="PEPTIDASE T"/>
    <property type="match status" value="1"/>
</dbReference>
<dbReference type="Pfam" id="PF07687">
    <property type="entry name" value="M20_dimer"/>
    <property type="match status" value="1"/>
</dbReference>
<dbReference type="Pfam" id="PF01546">
    <property type="entry name" value="Peptidase_M20"/>
    <property type="match status" value="1"/>
</dbReference>
<dbReference type="PIRSF" id="PIRSF037215">
    <property type="entry name" value="Peptidase_M20B"/>
    <property type="match status" value="1"/>
</dbReference>
<dbReference type="SUPFAM" id="SSF55031">
    <property type="entry name" value="Bacterial exopeptidase dimerisation domain"/>
    <property type="match status" value="1"/>
</dbReference>
<dbReference type="SUPFAM" id="SSF53187">
    <property type="entry name" value="Zn-dependent exopeptidases"/>
    <property type="match status" value="1"/>
</dbReference>
<dbReference type="PROSITE" id="PS00758">
    <property type="entry name" value="ARGE_DAPE_CPG2_1"/>
    <property type="match status" value="1"/>
</dbReference>
<dbReference type="PROSITE" id="PS00759">
    <property type="entry name" value="ARGE_DAPE_CPG2_2"/>
    <property type="match status" value="1"/>
</dbReference>
<gene>
    <name evidence="1" type="primary">pepT</name>
    <name type="ordered locus">SPT_1055</name>
</gene>
<proteinExistence type="inferred from homology"/>
<protein>
    <recommendedName>
        <fullName evidence="1">Peptidase T</fullName>
        <ecNumber evidence="1">3.4.11.4</ecNumber>
    </recommendedName>
    <alternativeName>
        <fullName evidence="1">Aminotripeptidase</fullName>
        <shortName evidence="1">Tripeptidase</shortName>
    </alternativeName>
    <alternativeName>
        <fullName evidence="1">Tripeptide aminopeptidase</fullName>
    </alternativeName>
</protein>
<sequence>MTYPNLLDHFLTYVKVNTRSDEHSTTTPSTQSQVDFATNVLIPEMKRVGLQNVYYLPNGFAIGTLPANDPSLTRKIGFISHMDTADFNAEGVNPQVIENYDGGVIELGNSGFKLDPADFKSLEKYPGQTLITTDGTTLLGADDKSGIAEIMTAIEYLTAHPEIKHCEIRVGFGPDEEIGVGANKFDAEDFDVDFAYTVDGGPLGELQYETFSAAGAELHFQGRNVHPGTAKGQMVNALQLAIDFHNQLPENDRPELTEGYQGFYHLMDVTGSVEETRASYIIRDFEKDAFEARKASMQSIADKMNEELGSDRVTLNLTDQYYNMKEVIEKDMTPITIAKAVMEDLGITPIIEPIRGGTDGSKISFMGIPTPNIFAGGENMHGRFEYVSLQTMERAVDTIIGIVAYKG</sequence>
<name>PEPT_STRZT</name>
<evidence type="ECO:0000255" key="1">
    <source>
        <dbReference type="HAMAP-Rule" id="MF_00550"/>
    </source>
</evidence>
<reference key="1">
    <citation type="journal article" date="2010" name="Genome Biol.">
        <title>Structure and dynamics of the pan-genome of Streptococcus pneumoniae and closely related species.</title>
        <authorList>
            <person name="Donati C."/>
            <person name="Hiller N.L."/>
            <person name="Tettelin H."/>
            <person name="Muzzi A."/>
            <person name="Croucher N.J."/>
            <person name="Angiuoli S.V."/>
            <person name="Oggioni M."/>
            <person name="Dunning Hotopp J.C."/>
            <person name="Hu F.Z."/>
            <person name="Riley D.R."/>
            <person name="Covacci A."/>
            <person name="Mitchell T.J."/>
            <person name="Bentley S.D."/>
            <person name="Kilian M."/>
            <person name="Ehrlich G.D."/>
            <person name="Rappuoli R."/>
            <person name="Moxon E.R."/>
            <person name="Masignani V."/>
        </authorList>
    </citation>
    <scope>NUCLEOTIDE SEQUENCE [LARGE SCALE GENOMIC DNA]</scope>
    <source>
        <strain>Taiwan19F-14</strain>
    </source>
</reference>
<organism>
    <name type="scientific">Streptococcus pneumoniae (strain Taiwan19F-14)</name>
    <dbReference type="NCBI Taxonomy" id="487213"/>
    <lineage>
        <taxon>Bacteria</taxon>
        <taxon>Bacillati</taxon>
        <taxon>Bacillota</taxon>
        <taxon>Bacilli</taxon>
        <taxon>Lactobacillales</taxon>
        <taxon>Streptococcaceae</taxon>
        <taxon>Streptococcus</taxon>
    </lineage>
</organism>
<keyword id="KW-0031">Aminopeptidase</keyword>
<keyword id="KW-0963">Cytoplasm</keyword>
<keyword id="KW-0378">Hydrolase</keyword>
<keyword id="KW-0479">Metal-binding</keyword>
<keyword id="KW-0482">Metalloprotease</keyword>
<keyword id="KW-0645">Protease</keyword>
<keyword id="KW-0862">Zinc</keyword>